<dbReference type="EMBL" id="AE004437">
    <property type="protein sequence ID" value="AAG20282.1"/>
    <property type="molecule type" value="Genomic_DNA"/>
</dbReference>
<dbReference type="PIR" id="F84364">
    <property type="entry name" value="F84364"/>
</dbReference>
<dbReference type="RefSeq" id="WP_010903584.1">
    <property type="nucleotide sequence ID" value="NC_002607.1"/>
</dbReference>
<dbReference type="SMR" id="Q9HND8"/>
<dbReference type="FunCoup" id="Q9HND8">
    <property type="interactions" value="32"/>
</dbReference>
<dbReference type="STRING" id="64091.VNG_2144G"/>
<dbReference type="PaxDb" id="64091-VNG_2144G"/>
<dbReference type="KEGG" id="hal:VNG_2144G"/>
<dbReference type="PATRIC" id="fig|64091.14.peg.1642"/>
<dbReference type="HOGENOM" id="CLU_025558_2_1_2"/>
<dbReference type="InParanoid" id="Q9HND8"/>
<dbReference type="OrthoDB" id="85892at2157"/>
<dbReference type="PhylomeDB" id="Q9HND8"/>
<dbReference type="Proteomes" id="UP000000554">
    <property type="component" value="Chromosome"/>
</dbReference>
<dbReference type="GO" id="GO:0005886">
    <property type="term" value="C:plasma membrane"/>
    <property type="evidence" value="ECO:0007669"/>
    <property type="project" value="UniProtKB-SubCell"/>
</dbReference>
<dbReference type="GO" id="GO:0033179">
    <property type="term" value="C:proton-transporting V-type ATPase, V0 domain"/>
    <property type="evidence" value="ECO:0007669"/>
    <property type="project" value="InterPro"/>
</dbReference>
<dbReference type="GO" id="GO:0016471">
    <property type="term" value="C:vacuolar proton-transporting V-type ATPase complex"/>
    <property type="evidence" value="ECO:0000318"/>
    <property type="project" value="GO_Central"/>
</dbReference>
<dbReference type="GO" id="GO:0051117">
    <property type="term" value="F:ATPase binding"/>
    <property type="evidence" value="ECO:0000318"/>
    <property type="project" value="GO_Central"/>
</dbReference>
<dbReference type="GO" id="GO:0046961">
    <property type="term" value="F:proton-transporting ATPase activity, rotational mechanism"/>
    <property type="evidence" value="ECO:0007669"/>
    <property type="project" value="InterPro"/>
</dbReference>
<dbReference type="GO" id="GO:0007035">
    <property type="term" value="P:vacuolar acidification"/>
    <property type="evidence" value="ECO:0000318"/>
    <property type="project" value="GO_Central"/>
</dbReference>
<dbReference type="Gene3D" id="1.20.1460.20">
    <property type="match status" value="1"/>
</dbReference>
<dbReference type="Gene3D" id="3.30.70.2170">
    <property type="match status" value="1"/>
</dbReference>
<dbReference type="Gene3D" id="3.30.70.2750">
    <property type="match status" value="1"/>
</dbReference>
<dbReference type="InterPro" id="IPR002490">
    <property type="entry name" value="V-ATPase_116kDa_su"/>
</dbReference>
<dbReference type="PANTHER" id="PTHR11629:SF63">
    <property type="entry name" value="V-TYPE PROTON ATPASE SUBUNIT A"/>
    <property type="match status" value="1"/>
</dbReference>
<dbReference type="PANTHER" id="PTHR11629">
    <property type="entry name" value="VACUOLAR PROTON ATPASES"/>
    <property type="match status" value="1"/>
</dbReference>
<dbReference type="Pfam" id="PF01496">
    <property type="entry name" value="V_ATPase_I"/>
    <property type="match status" value="2"/>
</dbReference>
<gene>
    <name evidence="4" type="primary">atpI</name>
    <name type="ordered locus">VNG_2144G</name>
</gene>
<proteinExistence type="inferred from homology"/>
<feature type="chain" id="PRO_0000119228" description="A-type ATP synthase subunit I">
    <location>
        <begin position="1"/>
        <end position="722"/>
    </location>
</feature>
<feature type="transmembrane region" description="Helical" evidence="2">
    <location>
        <begin position="384"/>
        <end position="404"/>
    </location>
</feature>
<feature type="transmembrane region" description="Helical" evidence="2">
    <location>
        <begin position="419"/>
        <end position="439"/>
    </location>
</feature>
<feature type="transmembrane region" description="Helical" evidence="2">
    <location>
        <begin position="474"/>
        <end position="494"/>
    </location>
</feature>
<feature type="transmembrane region" description="Helical" evidence="2">
    <location>
        <begin position="505"/>
        <end position="525"/>
    </location>
</feature>
<feature type="transmembrane region" description="Helical" evidence="2">
    <location>
        <begin position="554"/>
        <end position="574"/>
    </location>
</feature>
<feature type="transmembrane region" description="Helical" evidence="2">
    <location>
        <begin position="590"/>
        <end position="610"/>
    </location>
</feature>
<feature type="transmembrane region" description="Helical" evidence="2">
    <location>
        <begin position="639"/>
        <end position="659"/>
    </location>
</feature>
<feature type="transmembrane region" description="Helical" evidence="2">
    <location>
        <begin position="662"/>
        <end position="682"/>
    </location>
</feature>
<feature type="region of interest" description="Disordered" evidence="3">
    <location>
        <begin position="309"/>
        <end position="352"/>
    </location>
</feature>
<feature type="compositionally biased region" description="Basic and acidic residues" evidence="3">
    <location>
        <begin position="309"/>
        <end position="321"/>
    </location>
</feature>
<feature type="compositionally biased region" description="Low complexity" evidence="3">
    <location>
        <begin position="326"/>
        <end position="335"/>
    </location>
</feature>
<comment type="function">
    <text evidence="1">Component of the A-type ATP synthase that produces ATP from ADP in the presence of a proton gradient across the membrane.</text>
</comment>
<comment type="subunit">
    <text evidence="1">Has multiple subunits with at least A(3), B(3), C, D, E, F, H, I and proteolipid K(x).</text>
</comment>
<comment type="subcellular location">
    <subcellularLocation>
        <location evidence="5">Cell membrane</location>
        <topology evidence="5">Multi-pass membrane protein</topology>
    </subcellularLocation>
</comment>
<comment type="similarity">
    <text evidence="5">Belongs to the V-ATPase 116 kDa subunit family.</text>
</comment>
<accession>Q9HND8</accession>
<sequence length="722" mass="77176">MLRPEQMSKVSVAGSTHVLTPVIEAVHDAELVHLSDYDGGIDGFDNGDPMTGADEAAEKLVTVRSLKSLLDVSEGDAGPTRIVTDDALDTELESIRVEATDLDDRRSELTDDLRAVIERIDAAEPFADLGIDLDLLSGYDSLQVAVGTGDQSAIDAALAASDRISAFETFTGQDTIGVFAYPAADDDAALDDALVGVPFTRLDVPDADGSPEQYVSELRERRDTIQAEIEDVDDELAAFRDEHAGFLLAAEERLAIDVQKSEAPLQFASTSHAFVAEGWLPTSEYDAFTDAIESAVGDHVLVEELERADYKPTGHDQHVPADDGADAATDGGTTASFDETDSPPVIQDNPGPVSSFESLTEVINRPQYTEIDPTVVLFLTFPAFYGFMIGDLGYGVLYALLGFWLSRSFDSEMISKLGGVAMWAGGFTALFGVLYGEVFGLHLVTEYLWHGALGLADAPLKKGLHVSAFAELWLAASLVFGIAHLAIGYVFGFVNESRSHGLKDAALESGGQLLLMAGVGVWLFSTHMQSGGGPRPELLYSVVALPPIVGKAGLAAAVVGLVLVTLGEGAAGFLESPTYALVNTVSYTRIAAVLLAKAGMAYVVNLLVFGAYETHLEHPETIDYMFGLFSTTIEHETHFMLFSGEAHGEVLFPGLMHMGAAGILIGVLVLLVGHALVLALGVTSAGLQALRLEYVEFFNKFYEGGGEKYNPFGYTRNYTTED</sequence>
<protein>
    <recommendedName>
        <fullName evidence="5">A-type ATP synthase subunit I</fullName>
    </recommendedName>
</protein>
<evidence type="ECO:0000250" key="1">
    <source>
        <dbReference type="UniProtKB" id="Q57675"/>
    </source>
</evidence>
<evidence type="ECO:0000255" key="2"/>
<evidence type="ECO:0000256" key="3">
    <source>
        <dbReference type="SAM" id="MobiDB-lite"/>
    </source>
</evidence>
<evidence type="ECO:0000303" key="4">
    <source>
    </source>
</evidence>
<evidence type="ECO:0000305" key="5"/>
<name>AATI_HALSA</name>
<reference key="1">
    <citation type="journal article" date="2000" name="Proc. Natl. Acad. Sci. U.S.A.">
        <title>Genome sequence of Halobacterium species NRC-1.</title>
        <authorList>
            <person name="Ng W.V."/>
            <person name="Kennedy S.P."/>
            <person name="Mahairas G.G."/>
            <person name="Berquist B."/>
            <person name="Pan M."/>
            <person name="Shukla H.D."/>
            <person name="Lasky S.R."/>
            <person name="Baliga N.S."/>
            <person name="Thorsson V."/>
            <person name="Sbrogna J."/>
            <person name="Swartzell S."/>
            <person name="Weir D."/>
            <person name="Hall J."/>
            <person name="Dahl T.A."/>
            <person name="Welti R."/>
            <person name="Goo Y.A."/>
            <person name="Leithauser B."/>
            <person name="Keller K."/>
            <person name="Cruz R."/>
            <person name="Danson M.J."/>
            <person name="Hough D.W."/>
            <person name="Maddocks D.G."/>
            <person name="Jablonski P.E."/>
            <person name="Krebs M.P."/>
            <person name="Angevine C.M."/>
            <person name="Dale H."/>
            <person name="Isenbarger T.A."/>
            <person name="Peck R.F."/>
            <person name="Pohlschroder M."/>
            <person name="Spudich J.L."/>
            <person name="Jung K.-H."/>
            <person name="Alam M."/>
            <person name="Freitas T."/>
            <person name="Hou S."/>
            <person name="Daniels C.J."/>
            <person name="Dennis P.P."/>
            <person name="Omer A.D."/>
            <person name="Ebhardt H."/>
            <person name="Lowe T.M."/>
            <person name="Liang P."/>
            <person name="Riley M."/>
            <person name="Hood L."/>
            <person name="DasSarma S."/>
        </authorList>
    </citation>
    <scope>NUCLEOTIDE SEQUENCE [LARGE SCALE GENOMIC DNA]</scope>
    <source>
        <strain>ATCC 700922 / JCM 11081 / NRC-1</strain>
    </source>
</reference>
<keyword id="KW-1003">Cell membrane</keyword>
<keyword id="KW-0375">Hydrogen ion transport</keyword>
<keyword id="KW-0406">Ion transport</keyword>
<keyword id="KW-0472">Membrane</keyword>
<keyword id="KW-1185">Reference proteome</keyword>
<keyword id="KW-0812">Transmembrane</keyword>
<keyword id="KW-1133">Transmembrane helix</keyword>
<keyword id="KW-0813">Transport</keyword>
<organism>
    <name type="scientific">Halobacterium salinarum (strain ATCC 700922 / JCM 11081 / NRC-1)</name>
    <name type="common">Halobacterium halobium</name>
    <dbReference type="NCBI Taxonomy" id="64091"/>
    <lineage>
        <taxon>Archaea</taxon>
        <taxon>Methanobacteriati</taxon>
        <taxon>Methanobacteriota</taxon>
        <taxon>Stenosarchaea group</taxon>
        <taxon>Halobacteria</taxon>
        <taxon>Halobacteriales</taxon>
        <taxon>Halobacteriaceae</taxon>
        <taxon>Halobacterium</taxon>
        <taxon>Halobacterium salinarum NRC-34001</taxon>
    </lineage>
</organism>